<gene>
    <name evidence="1" type="primary">ccmE</name>
    <name evidence="1" type="synonym">cycJ</name>
    <name type="ordered locus">Sde_1870</name>
</gene>
<protein>
    <recommendedName>
        <fullName evidence="1">Cytochrome c-type biogenesis protein CcmE</fullName>
    </recommendedName>
    <alternativeName>
        <fullName evidence="1">Cytochrome c maturation protein E</fullName>
    </alternativeName>
    <alternativeName>
        <fullName evidence="1">Heme chaperone CcmE</fullName>
    </alternativeName>
</protein>
<name>CCME_SACD2</name>
<keyword id="KW-0997">Cell inner membrane</keyword>
<keyword id="KW-1003">Cell membrane</keyword>
<keyword id="KW-0201">Cytochrome c-type biogenesis</keyword>
<keyword id="KW-0349">Heme</keyword>
<keyword id="KW-0408">Iron</keyword>
<keyword id="KW-0472">Membrane</keyword>
<keyword id="KW-0479">Metal-binding</keyword>
<keyword id="KW-1185">Reference proteome</keyword>
<keyword id="KW-0735">Signal-anchor</keyword>
<keyword id="KW-0812">Transmembrane</keyword>
<keyword id="KW-1133">Transmembrane helix</keyword>
<dbReference type="EMBL" id="CP000282">
    <property type="protein sequence ID" value="ABD81130.1"/>
    <property type="molecule type" value="Genomic_DNA"/>
</dbReference>
<dbReference type="RefSeq" id="WP_011468348.1">
    <property type="nucleotide sequence ID" value="NC_007912.1"/>
</dbReference>
<dbReference type="SMR" id="Q21JJ9"/>
<dbReference type="STRING" id="203122.Sde_1870"/>
<dbReference type="GeneID" id="98613543"/>
<dbReference type="KEGG" id="sde:Sde_1870"/>
<dbReference type="eggNOG" id="COG2332">
    <property type="taxonomic scope" value="Bacteria"/>
</dbReference>
<dbReference type="HOGENOM" id="CLU_079503_1_1_6"/>
<dbReference type="OrthoDB" id="9793584at2"/>
<dbReference type="Proteomes" id="UP000001947">
    <property type="component" value="Chromosome"/>
</dbReference>
<dbReference type="GO" id="GO:0005886">
    <property type="term" value="C:plasma membrane"/>
    <property type="evidence" value="ECO:0007669"/>
    <property type="project" value="UniProtKB-SubCell"/>
</dbReference>
<dbReference type="GO" id="GO:0020037">
    <property type="term" value="F:heme binding"/>
    <property type="evidence" value="ECO:0007669"/>
    <property type="project" value="InterPro"/>
</dbReference>
<dbReference type="GO" id="GO:0046872">
    <property type="term" value="F:metal ion binding"/>
    <property type="evidence" value="ECO:0007669"/>
    <property type="project" value="UniProtKB-KW"/>
</dbReference>
<dbReference type="GO" id="GO:0017004">
    <property type="term" value="P:cytochrome complex assembly"/>
    <property type="evidence" value="ECO:0007669"/>
    <property type="project" value="UniProtKB-KW"/>
</dbReference>
<dbReference type="FunFam" id="2.40.50.140:FF:000104">
    <property type="entry name" value="Cytochrome c-type biogenesis protein CcmE"/>
    <property type="match status" value="1"/>
</dbReference>
<dbReference type="Gene3D" id="2.40.50.140">
    <property type="entry name" value="Nucleic acid-binding proteins"/>
    <property type="match status" value="1"/>
</dbReference>
<dbReference type="HAMAP" id="MF_01959">
    <property type="entry name" value="CcmE"/>
    <property type="match status" value="1"/>
</dbReference>
<dbReference type="InterPro" id="IPR004329">
    <property type="entry name" value="CcmE"/>
</dbReference>
<dbReference type="InterPro" id="IPR036127">
    <property type="entry name" value="CcmE-like_sf"/>
</dbReference>
<dbReference type="InterPro" id="IPR012340">
    <property type="entry name" value="NA-bd_OB-fold"/>
</dbReference>
<dbReference type="NCBIfam" id="NF009727">
    <property type="entry name" value="PRK13254.1-1"/>
    <property type="match status" value="1"/>
</dbReference>
<dbReference type="NCBIfam" id="NF009729">
    <property type="entry name" value="PRK13254.1-3"/>
    <property type="match status" value="1"/>
</dbReference>
<dbReference type="PANTHER" id="PTHR34128">
    <property type="entry name" value="CYTOCHROME C-TYPE BIOGENESIS PROTEIN CCME HOMOLOG, MITOCHONDRIAL"/>
    <property type="match status" value="1"/>
</dbReference>
<dbReference type="PANTHER" id="PTHR34128:SF2">
    <property type="entry name" value="CYTOCHROME C-TYPE BIOGENESIS PROTEIN CCME HOMOLOG, MITOCHONDRIAL"/>
    <property type="match status" value="1"/>
</dbReference>
<dbReference type="Pfam" id="PF03100">
    <property type="entry name" value="CcmE"/>
    <property type="match status" value="1"/>
</dbReference>
<dbReference type="SUPFAM" id="SSF82093">
    <property type="entry name" value="Heme chaperone CcmE"/>
    <property type="match status" value="1"/>
</dbReference>
<evidence type="ECO:0000255" key="1">
    <source>
        <dbReference type="HAMAP-Rule" id="MF_01959"/>
    </source>
</evidence>
<sequence length="157" mass="16853">MHPVRKQRLMTVLFIVIASSVAVGLMVFALSKNLNLFYPPSQIVSGEAPRGPTIRGGGCVVPGSVERASDSLKVAFSITDGKESVLVRYEGLLPDLFDEGEAAVVTGKVTQEGVFEAVEVLAKHDETYTPPEVENAMKESVDGVEHQKTCEGLDYAS</sequence>
<proteinExistence type="inferred from homology"/>
<organism>
    <name type="scientific">Saccharophagus degradans (strain 2-40 / ATCC 43961 / DSM 17024)</name>
    <dbReference type="NCBI Taxonomy" id="203122"/>
    <lineage>
        <taxon>Bacteria</taxon>
        <taxon>Pseudomonadati</taxon>
        <taxon>Pseudomonadota</taxon>
        <taxon>Gammaproteobacteria</taxon>
        <taxon>Cellvibrionales</taxon>
        <taxon>Cellvibrionaceae</taxon>
        <taxon>Saccharophagus</taxon>
    </lineage>
</organism>
<reference key="1">
    <citation type="journal article" date="2008" name="PLoS Genet.">
        <title>Complete genome sequence of the complex carbohydrate-degrading marine bacterium, Saccharophagus degradans strain 2-40 T.</title>
        <authorList>
            <person name="Weiner R.M."/>
            <person name="Taylor L.E. II"/>
            <person name="Henrissat B."/>
            <person name="Hauser L."/>
            <person name="Land M."/>
            <person name="Coutinho P.M."/>
            <person name="Rancurel C."/>
            <person name="Saunders E.H."/>
            <person name="Longmire A.G."/>
            <person name="Zhang H."/>
            <person name="Bayer E.A."/>
            <person name="Gilbert H.J."/>
            <person name="Larimer F."/>
            <person name="Zhulin I.B."/>
            <person name="Ekborg N.A."/>
            <person name="Lamed R."/>
            <person name="Richardson P.M."/>
            <person name="Borovok I."/>
            <person name="Hutcheson S."/>
        </authorList>
    </citation>
    <scope>NUCLEOTIDE SEQUENCE [LARGE SCALE GENOMIC DNA]</scope>
    <source>
        <strain>2-40 / ATCC 43961 / DSM 17024</strain>
    </source>
</reference>
<comment type="function">
    <text evidence="1">Heme chaperone required for the biogenesis of c-type cytochromes. Transiently binds heme delivered by CcmC and transfers the heme to apo-cytochromes in a process facilitated by CcmF and CcmH.</text>
</comment>
<comment type="subcellular location">
    <subcellularLocation>
        <location evidence="1">Cell inner membrane</location>
        <topology evidence="1">Single-pass type II membrane protein</topology>
        <orientation evidence="1">Periplasmic side</orientation>
    </subcellularLocation>
</comment>
<comment type="similarity">
    <text evidence="1">Belongs to the CcmE/CycJ family.</text>
</comment>
<feature type="chain" id="PRO_1000070849" description="Cytochrome c-type biogenesis protein CcmE">
    <location>
        <begin position="1"/>
        <end position="157"/>
    </location>
</feature>
<feature type="topological domain" description="Cytoplasmic" evidence="1">
    <location>
        <begin position="1"/>
        <end position="8"/>
    </location>
</feature>
<feature type="transmembrane region" description="Helical; Signal-anchor for type II membrane protein" evidence="1">
    <location>
        <begin position="9"/>
        <end position="29"/>
    </location>
</feature>
<feature type="topological domain" description="Periplasmic" evidence="1">
    <location>
        <begin position="30"/>
        <end position="157"/>
    </location>
</feature>
<feature type="binding site" description="covalent" evidence="1">
    <location>
        <position position="124"/>
    </location>
    <ligand>
        <name>heme</name>
        <dbReference type="ChEBI" id="CHEBI:30413"/>
    </ligand>
</feature>
<feature type="binding site" description="axial binding residue" evidence="1">
    <location>
        <position position="128"/>
    </location>
    <ligand>
        <name>heme</name>
        <dbReference type="ChEBI" id="CHEBI:30413"/>
    </ligand>
    <ligandPart>
        <name>Fe</name>
        <dbReference type="ChEBI" id="CHEBI:18248"/>
    </ligandPart>
</feature>
<accession>Q21JJ9</accession>